<gene>
    <name evidence="3" type="primary">CCB3</name>
    <name evidence="6" type="ordered locus">At5g36120</name>
    <name evidence="7" type="ORF">MAB16.6</name>
</gene>
<evidence type="ECO:0000250" key="1">
    <source>
        <dbReference type="UniProtKB" id="Q9FJ81"/>
    </source>
</evidence>
<evidence type="ECO:0000255" key="2"/>
<evidence type="ECO:0000303" key="3">
    <source>
    </source>
</evidence>
<evidence type="ECO:0000305" key="4"/>
<evidence type="ECO:0000305" key="5">
    <source>
    </source>
</evidence>
<evidence type="ECO:0000312" key="6">
    <source>
        <dbReference type="Araport" id="AT5G36120"/>
    </source>
</evidence>
<evidence type="ECO:0000312" key="7">
    <source>
        <dbReference type="EMBL" id="BAA96886.1"/>
    </source>
</evidence>
<protein>
    <recommendedName>
        <fullName evidence="4">Protein COFACTOR ASSEMBLY OF COMPLEX C SUBUNIT B CCB3, chloroplastic</fullName>
    </recommendedName>
    <alternativeName>
        <fullName evidence="4">YGGT family protein YLMG3</fullName>
    </alternativeName>
    <alternativeName>
        <fullName evidence="4">YlmG homolog protein 3</fullName>
        <shortName evidence="4">AtYLMG3</shortName>
    </alternativeName>
</protein>
<dbReference type="EMBL" id="AB018112">
    <property type="protein sequence ID" value="BAA96886.1"/>
    <property type="status" value="ALT_SEQ"/>
    <property type="molecule type" value="Genomic_DNA"/>
</dbReference>
<dbReference type="EMBL" id="CP002688">
    <property type="protein sequence ID" value="AED94046.1"/>
    <property type="molecule type" value="Genomic_DNA"/>
</dbReference>
<dbReference type="EMBL" id="AY092993">
    <property type="protein sequence ID" value="AAM12992.1"/>
    <property type="molecule type" value="mRNA"/>
</dbReference>
<dbReference type="EMBL" id="AY114603">
    <property type="protein sequence ID" value="AAM47922.1"/>
    <property type="molecule type" value="mRNA"/>
</dbReference>
<dbReference type="EMBL" id="AK221434">
    <property type="protein sequence ID" value="BAD94460.1"/>
    <property type="molecule type" value="mRNA"/>
</dbReference>
<dbReference type="RefSeq" id="NP_198461.2">
    <property type="nucleotide sequence ID" value="NM_123003.4"/>
</dbReference>
<dbReference type="SMR" id="Q8RWM7"/>
<dbReference type="FunCoup" id="Q8RWM7">
    <property type="interactions" value="564"/>
</dbReference>
<dbReference type="STRING" id="3702.Q8RWM7"/>
<dbReference type="PaxDb" id="3702-AT5G36120.1"/>
<dbReference type="ProteomicsDB" id="223941"/>
<dbReference type="EnsemblPlants" id="AT5G36120.1">
    <property type="protein sequence ID" value="AT5G36120.1"/>
    <property type="gene ID" value="AT5G36120"/>
</dbReference>
<dbReference type="GeneID" id="833608"/>
<dbReference type="Gramene" id="AT5G36120.1">
    <property type="protein sequence ID" value="AT5G36120.1"/>
    <property type="gene ID" value="AT5G36120"/>
</dbReference>
<dbReference type="KEGG" id="ath:AT5G36120"/>
<dbReference type="Araport" id="AT5G36120"/>
<dbReference type="TAIR" id="AT5G36120">
    <property type="gene designation" value="CCB3"/>
</dbReference>
<dbReference type="eggNOG" id="ENOG502S21M">
    <property type="taxonomic scope" value="Eukaryota"/>
</dbReference>
<dbReference type="HOGENOM" id="CLU_085547_1_0_1"/>
<dbReference type="InParanoid" id="Q8RWM7"/>
<dbReference type="OMA" id="PALMIFQ"/>
<dbReference type="PhylomeDB" id="Q8RWM7"/>
<dbReference type="PRO" id="PR:Q8RWM7"/>
<dbReference type="Proteomes" id="UP000006548">
    <property type="component" value="Chromosome 5"/>
</dbReference>
<dbReference type="ExpressionAtlas" id="Q8RWM7">
    <property type="expression patterns" value="baseline and differential"/>
</dbReference>
<dbReference type="GO" id="GO:0009507">
    <property type="term" value="C:chloroplast"/>
    <property type="evidence" value="ECO:0000314"/>
    <property type="project" value="TAIR"/>
</dbReference>
<dbReference type="GO" id="GO:0009535">
    <property type="term" value="C:chloroplast thylakoid membrane"/>
    <property type="evidence" value="ECO:0007005"/>
    <property type="project" value="TAIR"/>
</dbReference>
<dbReference type="GO" id="GO:0010190">
    <property type="term" value="P:cytochrome b6f complex assembly"/>
    <property type="evidence" value="ECO:0000315"/>
    <property type="project" value="TAIR"/>
</dbReference>
<dbReference type="InterPro" id="IPR003425">
    <property type="entry name" value="CCB3/YggT"/>
</dbReference>
<dbReference type="PANTHER" id="PTHR33219:SF14">
    <property type="entry name" value="PROTEIN COFACTOR ASSEMBLY OF COMPLEX C SUBUNIT B CCB3, CHLOROPLASTIC-RELATED"/>
    <property type="match status" value="1"/>
</dbReference>
<dbReference type="PANTHER" id="PTHR33219">
    <property type="entry name" value="YLMG HOMOLOG PROTEIN 2, CHLOROPLASTIC"/>
    <property type="match status" value="1"/>
</dbReference>
<dbReference type="Pfam" id="PF02325">
    <property type="entry name" value="YGGT"/>
    <property type="match status" value="1"/>
</dbReference>
<organism>
    <name type="scientific">Arabidopsis thaliana</name>
    <name type="common">Mouse-ear cress</name>
    <dbReference type="NCBI Taxonomy" id="3702"/>
    <lineage>
        <taxon>Eukaryota</taxon>
        <taxon>Viridiplantae</taxon>
        <taxon>Streptophyta</taxon>
        <taxon>Embryophyta</taxon>
        <taxon>Tracheophyta</taxon>
        <taxon>Spermatophyta</taxon>
        <taxon>Magnoliopsida</taxon>
        <taxon>eudicotyledons</taxon>
        <taxon>Gunneridae</taxon>
        <taxon>Pentapetalae</taxon>
        <taxon>rosids</taxon>
        <taxon>malvids</taxon>
        <taxon>Brassicales</taxon>
        <taxon>Brassicaceae</taxon>
        <taxon>Camelineae</taxon>
        <taxon>Arabidopsis</taxon>
    </lineage>
</organism>
<keyword id="KW-0150">Chloroplast</keyword>
<keyword id="KW-0472">Membrane</keyword>
<keyword id="KW-0934">Plastid</keyword>
<keyword id="KW-1185">Reference proteome</keyword>
<keyword id="KW-0793">Thylakoid</keyword>
<keyword id="KW-0809">Transit peptide</keyword>
<keyword id="KW-0812">Transmembrane</keyword>
<keyword id="KW-1133">Transmembrane helix</keyword>
<reference key="1">
    <citation type="journal article" date="2000" name="DNA Res.">
        <title>Structural analysis of Arabidopsis thaliana chromosome 5. X. Sequence features of the regions of 3,076,755 bp covered by sixty P1 and TAC clones.</title>
        <authorList>
            <person name="Sato S."/>
            <person name="Nakamura Y."/>
            <person name="Kaneko T."/>
            <person name="Katoh T."/>
            <person name="Asamizu E."/>
            <person name="Kotani H."/>
            <person name="Tabata S."/>
        </authorList>
    </citation>
    <scope>NUCLEOTIDE SEQUENCE [LARGE SCALE GENOMIC DNA]</scope>
    <source>
        <strain>cv. Columbia</strain>
    </source>
</reference>
<reference key="2">
    <citation type="journal article" date="2017" name="Plant J.">
        <title>Araport11: a complete reannotation of the Arabidopsis thaliana reference genome.</title>
        <authorList>
            <person name="Cheng C.Y."/>
            <person name="Krishnakumar V."/>
            <person name="Chan A.P."/>
            <person name="Thibaud-Nissen F."/>
            <person name="Schobel S."/>
            <person name="Town C.D."/>
        </authorList>
    </citation>
    <scope>GENOME REANNOTATION</scope>
    <source>
        <strain>cv. Columbia</strain>
    </source>
</reference>
<reference key="3">
    <citation type="journal article" date="2003" name="Science">
        <title>Empirical analysis of transcriptional activity in the Arabidopsis genome.</title>
        <authorList>
            <person name="Yamada K."/>
            <person name="Lim J."/>
            <person name="Dale J.M."/>
            <person name="Chen H."/>
            <person name="Shinn P."/>
            <person name="Palm C.J."/>
            <person name="Southwick A.M."/>
            <person name="Wu H.C."/>
            <person name="Kim C.J."/>
            <person name="Nguyen M."/>
            <person name="Pham P.K."/>
            <person name="Cheuk R.F."/>
            <person name="Karlin-Newmann G."/>
            <person name="Liu S.X."/>
            <person name="Lam B."/>
            <person name="Sakano H."/>
            <person name="Wu T."/>
            <person name="Yu G."/>
            <person name="Miranda M."/>
            <person name="Quach H.L."/>
            <person name="Tripp M."/>
            <person name="Chang C.H."/>
            <person name="Lee J.M."/>
            <person name="Toriumi M.J."/>
            <person name="Chan M.M."/>
            <person name="Tang C.C."/>
            <person name="Onodera C.S."/>
            <person name="Deng J.M."/>
            <person name="Akiyama K."/>
            <person name="Ansari Y."/>
            <person name="Arakawa T."/>
            <person name="Banh J."/>
            <person name="Banno F."/>
            <person name="Bowser L."/>
            <person name="Brooks S.Y."/>
            <person name="Carninci P."/>
            <person name="Chao Q."/>
            <person name="Choy N."/>
            <person name="Enju A."/>
            <person name="Goldsmith A.D."/>
            <person name="Gurjal M."/>
            <person name="Hansen N.F."/>
            <person name="Hayashizaki Y."/>
            <person name="Johnson-Hopson C."/>
            <person name="Hsuan V.W."/>
            <person name="Iida K."/>
            <person name="Karnes M."/>
            <person name="Khan S."/>
            <person name="Koesema E."/>
            <person name="Ishida J."/>
            <person name="Jiang P.X."/>
            <person name="Jones T."/>
            <person name="Kawai J."/>
            <person name="Kamiya A."/>
            <person name="Meyers C."/>
            <person name="Nakajima M."/>
            <person name="Narusaka M."/>
            <person name="Seki M."/>
            <person name="Sakurai T."/>
            <person name="Satou M."/>
            <person name="Tamse R."/>
            <person name="Vaysberg M."/>
            <person name="Wallender E.K."/>
            <person name="Wong C."/>
            <person name="Yamamura Y."/>
            <person name="Yuan S."/>
            <person name="Shinozaki K."/>
            <person name="Davis R.W."/>
            <person name="Theologis A."/>
            <person name="Ecker J.R."/>
        </authorList>
    </citation>
    <scope>NUCLEOTIDE SEQUENCE [LARGE SCALE MRNA]</scope>
    <source>
        <strain>cv. Columbia</strain>
    </source>
</reference>
<reference key="4">
    <citation type="submission" date="2005-03" db="EMBL/GenBank/DDBJ databases">
        <title>Large-scale analysis of RIKEN Arabidopsis full-length (RAFL) cDNAs.</title>
        <authorList>
            <person name="Totoki Y."/>
            <person name="Seki M."/>
            <person name="Ishida J."/>
            <person name="Nakajima M."/>
            <person name="Enju A."/>
            <person name="Kamiya A."/>
            <person name="Narusaka M."/>
            <person name="Shin-i T."/>
            <person name="Nakagawa M."/>
            <person name="Sakamoto N."/>
            <person name="Oishi K."/>
            <person name="Kohara Y."/>
            <person name="Kobayashi M."/>
            <person name="Toyoda A."/>
            <person name="Sakaki Y."/>
            <person name="Sakurai T."/>
            <person name="Iida K."/>
            <person name="Akiyama K."/>
            <person name="Satou M."/>
            <person name="Toyoda T."/>
            <person name="Konagaya A."/>
            <person name="Carninci P."/>
            <person name="Kawai J."/>
            <person name="Hayashizaki Y."/>
            <person name="Shinozaki K."/>
        </authorList>
    </citation>
    <scope>NUCLEOTIDE SEQUENCE [LARGE SCALE MRNA]</scope>
    <source>
        <strain>cv. Columbia</strain>
    </source>
</reference>
<reference key="5">
    <citation type="journal article" date="2008" name="J. Biol. Chem.">
        <title>A novel pathway of cytochrome c biogenesis is involved in the assembly of the cytochrome b6f complex in arabidopsis chloroplasts.</title>
        <authorList>
            <person name="Lezhneva L."/>
            <person name="Kuras R."/>
            <person name="Ephritikhine G."/>
            <person name="de Vitry C."/>
        </authorList>
    </citation>
    <scope>SUBCELLULAR LOCATION</scope>
    <scope>TOPOLOGY</scope>
</reference>
<sequence length="174" mass="18973">MTTVTTSFVSFSPALMIFQKKSRRSSPNFRNRSTSLPIVSATLSHIEEAATTTNLIRQTNSISESLRNISLADLDPGTAKLAIGILGPALSAFGFLFILRIVMSWYPKLPVDKFPYVLAYAPTEPILVQTRKVIPPLAGVDVTPVVWFGLVSFLSEILVGPQGLLVLVSQQQVN</sequence>
<comment type="function">
    <text evidence="1">Required for the biogenesis and accumulation of native cytochrome b6 in the thylakoid membrane. Controls the conversion of apocytochrome b6 to holocytochrome b6. Required for covalent binding of the c-type heme to cytochrome b6.</text>
</comment>
<comment type="subcellular location">
    <subcellularLocation>
        <location evidence="5">Plastid</location>
        <location evidence="5">Chloroplast thylakoid membrane</location>
        <topology evidence="2">Multi-pass membrane protein</topology>
    </subcellularLocation>
</comment>
<comment type="similarity">
    <text evidence="4">Belongs to the YggT family.</text>
</comment>
<comment type="sequence caution" evidence="4">
    <conflict type="erroneous gene model prediction">
        <sequence resource="EMBL-CDS" id="BAA96886"/>
    </conflict>
</comment>
<accession>Q8RWM7</accession>
<accession>Q9LVY6</accession>
<name>CCB3_ARATH</name>
<feature type="transit peptide" description="Chloroplast" evidence="2">
    <location>
        <begin position="1"/>
        <end position="39"/>
    </location>
</feature>
<feature type="chain" id="PRO_0000433265" description="Protein COFACTOR ASSEMBLY OF COMPLEX C SUBUNIT B CCB3, chloroplastic" evidence="2">
    <location>
        <begin position="40"/>
        <end position="174"/>
    </location>
</feature>
<feature type="topological domain" description="Lumenal" evidence="5">
    <location>
        <begin position="40"/>
        <end position="78"/>
    </location>
</feature>
<feature type="transmembrane region" description="Helical" evidence="2">
    <location>
        <begin position="79"/>
        <end position="99"/>
    </location>
</feature>
<feature type="topological domain" description="Stromal" evidence="5">
    <location>
        <begin position="100"/>
        <end position="147"/>
    </location>
</feature>
<feature type="transmembrane region" description="Helical" evidence="2">
    <location>
        <begin position="148"/>
        <end position="168"/>
    </location>
</feature>
<feature type="topological domain" description="Lumenal" evidence="5">
    <location>
        <begin position="169"/>
        <end position="174"/>
    </location>
</feature>
<proteinExistence type="evidence at protein level"/>